<gene>
    <name evidence="1" type="primary">cheB3</name>
    <name type="ordered locus">LIC_11520</name>
</gene>
<comment type="function">
    <text evidence="1">Involved in chemotaxis. Part of a chemotaxis signal transduction system that modulates chemotaxis in response to various stimuli. Catalyzes the demethylation of specific methylglutamate residues introduced into the chemoreceptors (methyl-accepting chemotaxis proteins or MCP) by CheR. Also mediates the irreversible deamidation of specific glutamine residues to glutamic acid.</text>
</comment>
<comment type="catalytic activity">
    <reaction evidence="1">
        <text>[protein]-L-glutamate 5-O-methyl ester + H2O = L-glutamyl-[protein] + methanol + H(+)</text>
        <dbReference type="Rhea" id="RHEA:23236"/>
        <dbReference type="Rhea" id="RHEA-COMP:10208"/>
        <dbReference type="Rhea" id="RHEA-COMP:10311"/>
        <dbReference type="ChEBI" id="CHEBI:15377"/>
        <dbReference type="ChEBI" id="CHEBI:15378"/>
        <dbReference type="ChEBI" id="CHEBI:17790"/>
        <dbReference type="ChEBI" id="CHEBI:29973"/>
        <dbReference type="ChEBI" id="CHEBI:82795"/>
        <dbReference type="EC" id="3.1.1.61"/>
    </reaction>
</comment>
<comment type="catalytic activity">
    <reaction evidence="1">
        <text>L-glutaminyl-[protein] + H2O = L-glutamyl-[protein] + NH4(+)</text>
        <dbReference type="Rhea" id="RHEA:16441"/>
        <dbReference type="Rhea" id="RHEA-COMP:10207"/>
        <dbReference type="Rhea" id="RHEA-COMP:10208"/>
        <dbReference type="ChEBI" id="CHEBI:15377"/>
        <dbReference type="ChEBI" id="CHEBI:28938"/>
        <dbReference type="ChEBI" id="CHEBI:29973"/>
        <dbReference type="ChEBI" id="CHEBI:30011"/>
        <dbReference type="EC" id="3.5.1.44"/>
    </reaction>
</comment>
<comment type="subcellular location">
    <subcellularLocation>
        <location evidence="1">Cytoplasm</location>
    </subcellularLocation>
</comment>
<comment type="domain">
    <text evidence="1">Contains a C-terminal catalytic domain, and an N-terminal region which modulates catalytic activity.</text>
</comment>
<comment type="PTM">
    <text evidence="1">Phosphorylated by CheA. Phosphorylation of the N-terminal regulatory domain activates the methylesterase activity.</text>
</comment>
<comment type="similarity">
    <text evidence="1">Belongs to the CheB family.</text>
</comment>
<reference key="1">
    <citation type="journal article" date="2004" name="J. Bacteriol.">
        <title>Comparative genomics of two Leptospira interrogans serovars reveals novel insights into physiology and pathogenesis.</title>
        <authorList>
            <person name="Nascimento A.L.T.O."/>
            <person name="Ko A.I."/>
            <person name="Martins E.A.L."/>
            <person name="Monteiro-Vitorello C.B."/>
            <person name="Ho P.L."/>
            <person name="Haake D.A."/>
            <person name="Verjovski-Almeida S."/>
            <person name="Hartskeerl R.A."/>
            <person name="Marques M.V."/>
            <person name="Oliveira M.C."/>
            <person name="Menck C.F.M."/>
            <person name="Leite L.C.C."/>
            <person name="Carrer H."/>
            <person name="Coutinho L.L."/>
            <person name="Degrave W.M."/>
            <person name="Dellagostin O.A."/>
            <person name="El-Dorry H."/>
            <person name="Ferro E.S."/>
            <person name="Ferro M.I.T."/>
            <person name="Furlan L.R."/>
            <person name="Gamberini M."/>
            <person name="Giglioti E.A."/>
            <person name="Goes-Neto A."/>
            <person name="Goldman G.H."/>
            <person name="Goldman M.H.S."/>
            <person name="Harakava R."/>
            <person name="Jeronimo S.M.B."/>
            <person name="Junqueira-de-Azevedo I.L.M."/>
            <person name="Kimura E.T."/>
            <person name="Kuramae E.E."/>
            <person name="Lemos E.G.M."/>
            <person name="Lemos M.V.F."/>
            <person name="Marino C.L."/>
            <person name="Nunes L.R."/>
            <person name="de Oliveira R.C."/>
            <person name="Pereira G.G."/>
            <person name="Reis M.S."/>
            <person name="Schriefer A."/>
            <person name="Siqueira W.J."/>
            <person name="Sommer P."/>
            <person name="Tsai S.M."/>
            <person name="Simpson A.J.G."/>
            <person name="Ferro J.A."/>
            <person name="Camargo L.E.A."/>
            <person name="Kitajima J.P."/>
            <person name="Setubal J.C."/>
            <person name="Van Sluys M.A."/>
        </authorList>
    </citation>
    <scope>NUCLEOTIDE SEQUENCE [LARGE SCALE GENOMIC DNA]</scope>
    <source>
        <strain>Fiocruz L1-130</strain>
    </source>
</reference>
<feature type="chain" id="PRO_0000158001" description="Protein-glutamate methylesterase/protein-glutamine glutaminase 3">
    <location>
        <begin position="1"/>
        <end position="347"/>
    </location>
</feature>
<feature type="domain" description="Response regulatory" evidence="1">
    <location>
        <begin position="3"/>
        <end position="120"/>
    </location>
</feature>
<feature type="domain" description="CheB-type methylesterase" evidence="1">
    <location>
        <begin position="159"/>
        <end position="347"/>
    </location>
</feature>
<feature type="active site" evidence="1">
    <location>
        <position position="171"/>
    </location>
</feature>
<feature type="active site" evidence="1">
    <location>
        <position position="197"/>
    </location>
</feature>
<feature type="active site" evidence="1">
    <location>
        <position position="293"/>
    </location>
</feature>
<feature type="modified residue" description="4-aspartylphosphate" evidence="1">
    <location>
        <position position="54"/>
    </location>
</feature>
<accession>P62643</accession>
<accession>Q72S66</accession>
<evidence type="ECO:0000255" key="1">
    <source>
        <dbReference type="HAMAP-Rule" id="MF_00099"/>
    </source>
</evidence>
<name>CHEB3_LEPIC</name>
<dbReference type="EC" id="3.1.1.61" evidence="1"/>
<dbReference type="EC" id="3.5.1.44" evidence="1"/>
<dbReference type="EMBL" id="AE016823">
    <property type="protein sequence ID" value="AAS70116.1"/>
    <property type="molecule type" value="Genomic_DNA"/>
</dbReference>
<dbReference type="RefSeq" id="WP_000616854.1">
    <property type="nucleotide sequence ID" value="NC_005823.1"/>
</dbReference>
<dbReference type="SMR" id="P62643"/>
<dbReference type="KEGG" id="lic:LIC_11520"/>
<dbReference type="HOGENOM" id="CLU_000445_51_0_12"/>
<dbReference type="Proteomes" id="UP000007037">
    <property type="component" value="Chromosome I"/>
</dbReference>
<dbReference type="GO" id="GO:0005737">
    <property type="term" value="C:cytoplasm"/>
    <property type="evidence" value="ECO:0007669"/>
    <property type="project" value="UniProtKB-SubCell"/>
</dbReference>
<dbReference type="GO" id="GO:0000156">
    <property type="term" value="F:phosphorelay response regulator activity"/>
    <property type="evidence" value="ECO:0007669"/>
    <property type="project" value="InterPro"/>
</dbReference>
<dbReference type="GO" id="GO:0008984">
    <property type="term" value="F:protein-glutamate methylesterase activity"/>
    <property type="evidence" value="ECO:0007669"/>
    <property type="project" value="UniProtKB-UniRule"/>
</dbReference>
<dbReference type="GO" id="GO:0050568">
    <property type="term" value="F:protein-glutamine glutaminase activity"/>
    <property type="evidence" value="ECO:0007669"/>
    <property type="project" value="UniProtKB-UniRule"/>
</dbReference>
<dbReference type="GO" id="GO:0006935">
    <property type="term" value="P:chemotaxis"/>
    <property type="evidence" value="ECO:0007669"/>
    <property type="project" value="UniProtKB-UniRule"/>
</dbReference>
<dbReference type="CDD" id="cd16432">
    <property type="entry name" value="CheB_Rec"/>
    <property type="match status" value="1"/>
</dbReference>
<dbReference type="CDD" id="cd17541">
    <property type="entry name" value="REC_CheB-like"/>
    <property type="match status" value="1"/>
</dbReference>
<dbReference type="Gene3D" id="3.40.50.2300">
    <property type="match status" value="1"/>
</dbReference>
<dbReference type="Gene3D" id="3.40.50.180">
    <property type="entry name" value="Methylesterase CheB, C-terminal domain"/>
    <property type="match status" value="1"/>
</dbReference>
<dbReference type="HAMAP" id="MF_00099">
    <property type="entry name" value="CheB_chemtxs"/>
    <property type="match status" value="1"/>
</dbReference>
<dbReference type="InterPro" id="IPR008248">
    <property type="entry name" value="CheB-like"/>
</dbReference>
<dbReference type="InterPro" id="IPR035909">
    <property type="entry name" value="CheB_C"/>
</dbReference>
<dbReference type="InterPro" id="IPR011006">
    <property type="entry name" value="CheY-like_superfamily"/>
</dbReference>
<dbReference type="InterPro" id="IPR000673">
    <property type="entry name" value="Sig_transdc_resp-reg_Me-estase"/>
</dbReference>
<dbReference type="InterPro" id="IPR001789">
    <property type="entry name" value="Sig_transdc_resp-reg_receiver"/>
</dbReference>
<dbReference type="NCBIfam" id="NF001965">
    <property type="entry name" value="PRK00742.1"/>
    <property type="match status" value="1"/>
</dbReference>
<dbReference type="NCBIfam" id="NF009206">
    <property type="entry name" value="PRK12555.1"/>
    <property type="match status" value="1"/>
</dbReference>
<dbReference type="PANTHER" id="PTHR42872">
    <property type="entry name" value="PROTEIN-GLUTAMATE METHYLESTERASE/PROTEIN-GLUTAMINE GLUTAMINASE"/>
    <property type="match status" value="1"/>
</dbReference>
<dbReference type="PANTHER" id="PTHR42872:SF6">
    <property type="entry name" value="PROTEIN-GLUTAMATE METHYLESTERASE_PROTEIN-GLUTAMINE GLUTAMINASE"/>
    <property type="match status" value="1"/>
</dbReference>
<dbReference type="Pfam" id="PF01339">
    <property type="entry name" value="CheB_methylest"/>
    <property type="match status" value="1"/>
</dbReference>
<dbReference type="Pfam" id="PF00072">
    <property type="entry name" value="Response_reg"/>
    <property type="match status" value="1"/>
</dbReference>
<dbReference type="PIRSF" id="PIRSF000876">
    <property type="entry name" value="RR_chemtxs_CheB"/>
    <property type="match status" value="1"/>
</dbReference>
<dbReference type="SMART" id="SM00448">
    <property type="entry name" value="REC"/>
    <property type="match status" value="1"/>
</dbReference>
<dbReference type="SUPFAM" id="SSF52172">
    <property type="entry name" value="CheY-like"/>
    <property type="match status" value="1"/>
</dbReference>
<dbReference type="SUPFAM" id="SSF52738">
    <property type="entry name" value="Methylesterase CheB, C-terminal domain"/>
    <property type="match status" value="1"/>
</dbReference>
<dbReference type="PROSITE" id="PS50122">
    <property type="entry name" value="CHEB"/>
    <property type="match status" value="1"/>
</dbReference>
<dbReference type="PROSITE" id="PS50110">
    <property type="entry name" value="RESPONSE_REGULATORY"/>
    <property type="match status" value="1"/>
</dbReference>
<protein>
    <recommendedName>
        <fullName evidence="1">Protein-glutamate methylesterase/protein-glutamine glutaminase 3</fullName>
        <ecNumber evidence="1">3.1.1.61</ecNumber>
        <ecNumber evidence="1">3.5.1.44</ecNumber>
    </recommendedName>
</protein>
<proteinExistence type="inferred from homology"/>
<sequence>MIQVFIVDDSAVVRQVLTQILNKDPEIEIIGFASDPIFASEKLSSVWPDVFILDIEMPRMDGISFLKKIMSEKPTPVIICSSLAEKESETAVLAMKLGAVDIIEKPKVGLKNFLEESEILFIDSVRAASNARVKTHSFQNDDSKFLENHKQPKTDFSKIDTTDKLIAIGTSTGGTQALEFILTQLNIHCPGIVIVQHMPEKFTEAFANRLNQVCKIQVKEAKDGDRVQLGSAYIAPGNKHMEIYLSGAQFHIRVLDGPLVNRHRPSVDTLFHSVAKAAGKNAKGIIMTGMGNDGANGLLKMKQSGAHTIAQDEASCVVFGMPKEAILKGAVNTILPLSKIVGEVQYF</sequence>
<organism>
    <name type="scientific">Leptospira interrogans serogroup Icterohaemorrhagiae serovar copenhageni (strain Fiocruz L1-130)</name>
    <dbReference type="NCBI Taxonomy" id="267671"/>
    <lineage>
        <taxon>Bacteria</taxon>
        <taxon>Pseudomonadati</taxon>
        <taxon>Spirochaetota</taxon>
        <taxon>Spirochaetia</taxon>
        <taxon>Leptospirales</taxon>
        <taxon>Leptospiraceae</taxon>
        <taxon>Leptospira</taxon>
    </lineage>
</organism>
<keyword id="KW-0145">Chemotaxis</keyword>
<keyword id="KW-0963">Cytoplasm</keyword>
<keyword id="KW-0378">Hydrolase</keyword>
<keyword id="KW-0597">Phosphoprotein</keyword>